<organism>
    <name type="scientific">Homo sapiens</name>
    <name type="common">Human</name>
    <dbReference type="NCBI Taxonomy" id="9606"/>
    <lineage>
        <taxon>Eukaryota</taxon>
        <taxon>Metazoa</taxon>
        <taxon>Chordata</taxon>
        <taxon>Craniata</taxon>
        <taxon>Vertebrata</taxon>
        <taxon>Euteleostomi</taxon>
        <taxon>Mammalia</taxon>
        <taxon>Eutheria</taxon>
        <taxon>Euarchontoglires</taxon>
        <taxon>Primates</taxon>
        <taxon>Haplorrhini</taxon>
        <taxon>Catarrhini</taxon>
        <taxon>Hominidae</taxon>
        <taxon>Homo</taxon>
    </lineage>
</organism>
<protein>
    <recommendedName>
        <fullName>Phosphopantothenoylcysteine decarboxylase</fullName>
        <shortName>PPC-DC</shortName>
        <ecNumber evidence="2 4">4.1.1.36</ecNumber>
    </recommendedName>
    <alternativeName>
        <fullName>CoaC</fullName>
    </alternativeName>
</protein>
<dbReference type="EC" id="4.1.1.36" evidence="2 4"/>
<dbReference type="EMBL" id="AF182419">
    <property type="protein sequence ID" value="AAG14955.1"/>
    <property type="molecule type" value="mRNA"/>
</dbReference>
<dbReference type="EMBL" id="AY358848">
    <property type="protein sequence ID" value="AAQ89207.1"/>
    <property type="molecule type" value="mRNA"/>
</dbReference>
<dbReference type="EMBL" id="AK027491">
    <property type="protein sequence ID" value="BAB55151.1"/>
    <property type="molecule type" value="mRNA"/>
</dbReference>
<dbReference type="EMBL" id="AC015720">
    <property type="status" value="NOT_ANNOTATED_CDS"/>
    <property type="molecule type" value="Genomic_DNA"/>
</dbReference>
<dbReference type="EMBL" id="BC014409">
    <property type="protein sequence ID" value="AAH14409.1"/>
    <property type="molecule type" value="mRNA"/>
</dbReference>
<dbReference type="CCDS" id="CCDS10275.1">
    <molecule id="Q96CD2-1"/>
</dbReference>
<dbReference type="RefSeq" id="NP_001288030.1">
    <property type="nucleotide sequence ID" value="NM_001301101.1"/>
</dbReference>
<dbReference type="RefSeq" id="NP_001288031.1">
    <property type="nucleotide sequence ID" value="NM_001301102.1"/>
</dbReference>
<dbReference type="RefSeq" id="NP_001288032.1">
    <property type="nucleotide sequence ID" value="NM_001301103.1"/>
</dbReference>
<dbReference type="RefSeq" id="NP_001288033.1">
    <property type="nucleotide sequence ID" value="NM_001301104.1"/>
</dbReference>
<dbReference type="RefSeq" id="NP_001288034.1">
    <property type="nucleotide sequence ID" value="NM_001301105.1"/>
</dbReference>
<dbReference type="RefSeq" id="NP_068595.3">
    <molecule id="Q96CD2-1"/>
    <property type="nucleotide sequence ID" value="NM_021823.4"/>
</dbReference>
<dbReference type="PDB" id="1QZU">
    <property type="method" value="X-ray"/>
    <property type="resolution" value="2.91 A"/>
    <property type="chains" value="A/B/C/D=1-204"/>
</dbReference>
<dbReference type="PDBsum" id="1QZU"/>
<dbReference type="SMR" id="Q96CD2"/>
<dbReference type="BioGRID" id="121921">
    <property type="interactions" value="19"/>
</dbReference>
<dbReference type="FunCoup" id="Q96CD2">
    <property type="interactions" value="642"/>
</dbReference>
<dbReference type="IntAct" id="Q96CD2">
    <property type="interactions" value="16"/>
</dbReference>
<dbReference type="MINT" id="Q96CD2"/>
<dbReference type="STRING" id="9606.ENSP00000343190"/>
<dbReference type="DrugBank" id="DB03247">
    <property type="generic name" value="Flavin mononucleotide"/>
</dbReference>
<dbReference type="DrugBank" id="DB03738">
    <property type="generic name" value="Pantothenoylaminoethenethiol"/>
</dbReference>
<dbReference type="GlyGen" id="Q96CD2">
    <property type="glycosylation" value="1 site, 1 O-linked glycan (1 site)"/>
</dbReference>
<dbReference type="iPTMnet" id="Q96CD2"/>
<dbReference type="PhosphoSitePlus" id="Q96CD2"/>
<dbReference type="BioMuta" id="PPCDC"/>
<dbReference type="DMDM" id="296434457"/>
<dbReference type="jPOST" id="Q96CD2"/>
<dbReference type="MassIVE" id="Q96CD2"/>
<dbReference type="PaxDb" id="9606-ENSP00000343190"/>
<dbReference type="PeptideAtlas" id="Q96CD2"/>
<dbReference type="ProteomicsDB" id="76180">
    <molecule id="Q96CD2-1"/>
</dbReference>
<dbReference type="ProteomicsDB" id="76181">
    <molecule id="Q96CD2-2"/>
</dbReference>
<dbReference type="Pumba" id="Q96CD2"/>
<dbReference type="Antibodypedia" id="14730">
    <property type="antibodies" value="107 antibodies from 18 providers"/>
</dbReference>
<dbReference type="DNASU" id="60490"/>
<dbReference type="Ensembl" id="ENST00000342932.8">
    <molecule id="Q96CD2-1"/>
    <property type="protein sequence ID" value="ENSP00000343190.3"/>
    <property type="gene ID" value="ENSG00000138621.12"/>
</dbReference>
<dbReference type="GeneID" id="60490"/>
<dbReference type="KEGG" id="hsa:60490"/>
<dbReference type="MANE-Select" id="ENST00000342932.8">
    <property type="protein sequence ID" value="ENSP00000343190.3"/>
    <property type="RefSeq nucleotide sequence ID" value="NM_021823.5"/>
    <property type="RefSeq protein sequence ID" value="NP_068595.3"/>
</dbReference>
<dbReference type="UCSC" id="uc002azo.4">
    <molecule id="Q96CD2-1"/>
    <property type="organism name" value="human"/>
</dbReference>
<dbReference type="AGR" id="HGNC:28107"/>
<dbReference type="CTD" id="60490"/>
<dbReference type="DisGeNET" id="60490"/>
<dbReference type="GeneCards" id="PPCDC"/>
<dbReference type="HGNC" id="HGNC:28107">
    <property type="gene designation" value="PPCDC"/>
</dbReference>
<dbReference type="HPA" id="ENSG00000138621">
    <property type="expression patterns" value="Low tissue specificity"/>
</dbReference>
<dbReference type="MIM" id="609854">
    <property type="type" value="gene"/>
</dbReference>
<dbReference type="neXtProt" id="NX_Q96CD2"/>
<dbReference type="OpenTargets" id="ENSG00000138621"/>
<dbReference type="PharmGKB" id="PA142671157"/>
<dbReference type="VEuPathDB" id="HostDB:ENSG00000138621"/>
<dbReference type="eggNOG" id="KOG0672">
    <property type="taxonomic scope" value="Eukaryota"/>
</dbReference>
<dbReference type="GeneTree" id="ENSGT00440000038107"/>
<dbReference type="HOGENOM" id="CLU_033319_3_2_1"/>
<dbReference type="InParanoid" id="Q96CD2"/>
<dbReference type="OMA" id="KGLACGD"/>
<dbReference type="OrthoDB" id="1532798at2759"/>
<dbReference type="PAN-GO" id="Q96CD2">
    <property type="GO annotations" value="4 GO annotations based on evolutionary models"/>
</dbReference>
<dbReference type="PhylomeDB" id="Q96CD2"/>
<dbReference type="TreeFam" id="TF315740"/>
<dbReference type="BioCyc" id="MetaCyc:HS13735-MONOMER"/>
<dbReference type="PathwayCommons" id="Q96CD2"/>
<dbReference type="Reactome" id="R-HSA-196783">
    <property type="pathway name" value="Coenzyme A biosynthesis"/>
</dbReference>
<dbReference type="SABIO-RK" id="Q96CD2"/>
<dbReference type="SignaLink" id="Q96CD2"/>
<dbReference type="SIGNOR" id="Q96CD2"/>
<dbReference type="UniPathway" id="UPA00241">
    <property type="reaction ID" value="UER00354"/>
</dbReference>
<dbReference type="BioGRID-ORCS" id="60490">
    <property type="hits" value="116 hits in 1160 CRISPR screens"/>
</dbReference>
<dbReference type="ChiTaRS" id="PPCDC">
    <property type="organism name" value="human"/>
</dbReference>
<dbReference type="EvolutionaryTrace" id="Q96CD2"/>
<dbReference type="GenomeRNAi" id="60490"/>
<dbReference type="Pharos" id="Q96CD2">
    <property type="development level" value="Tbio"/>
</dbReference>
<dbReference type="PRO" id="PR:Q96CD2"/>
<dbReference type="Proteomes" id="UP000005640">
    <property type="component" value="Chromosome 15"/>
</dbReference>
<dbReference type="RNAct" id="Q96CD2">
    <property type="molecule type" value="protein"/>
</dbReference>
<dbReference type="Bgee" id="ENSG00000138621">
    <property type="expression patterns" value="Expressed in blood and 145 other cell types or tissues"/>
</dbReference>
<dbReference type="ExpressionAtlas" id="Q96CD2">
    <property type="expression patterns" value="baseline and differential"/>
</dbReference>
<dbReference type="GO" id="GO:0005829">
    <property type="term" value="C:cytosol"/>
    <property type="evidence" value="ECO:0000304"/>
    <property type="project" value="Reactome"/>
</dbReference>
<dbReference type="GO" id="GO:0071513">
    <property type="term" value="C:phosphopantothenoylcysteine decarboxylase complex"/>
    <property type="evidence" value="ECO:0000318"/>
    <property type="project" value="GO_Central"/>
</dbReference>
<dbReference type="GO" id="GO:0010181">
    <property type="term" value="F:FMN binding"/>
    <property type="evidence" value="ECO:0000314"/>
    <property type="project" value="UniProtKB"/>
</dbReference>
<dbReference type="GO" id="GO:0042802">
    <property type="term" value="F:identical protein binding"/>
    <property type="evidence" value="ECO:0000314"/>
    <property type="project" value="UniProtKB"/>
</dbReference>
<dbReference type="GO" id="GO:0004633">
    <property type="term" value="F:phosphopantothenoylcysteine decarboxylase activity"/>
    <property type="evidence" value="ECO:0000314"/>
    <property type="project" value="UniProtKB"/>
</dbReference>
<dbReference type="GO" id="GO:0015937">
    <property type="term" value="P:coenzyme A biosynthetic process"/>
    <property type="evidence" value="ECO:0000314"/>
    <property type="project" value="UniProtKB"/>
</dbReference>
<dbReference type="FunFam" id="3.40.50.1950:FF:000004">
    <property type="entry name" value="Phosphopantothenoylcysteine decarboxylase"/>
    <property type="match status" value="1"/>
</dbReference>
<dbReference type="Gene3D" id="3.40.50.1950">
    <property type="entry name" value="Flavin prenyltransferase-like"/>
    <property type="match status" value="1"/>
</dbReference>
<dbReference type="InterPro" id="IPR036551">
    <property type="entry name" value="Flavin_trans-like"/>
</dbReference>
<dbReference type="InterPro" id="IPR003382">
    <property type="entry name" value="Flavoprotein"/>
</dbReference>
<dbReference type="PANTHER" id="PTHR14359">
    <property type="entry name" value="HOMO-OLIGOMERIC FLAVIN CONTAINING CYS DECARBOXYLASE FAMILY"/>
    <property type="match status" value="1"/>
</dbReference>
<dbReference type="PANTHER" id="PTHR14359:SF6">
    <property type="entry name" value="PHOSPHOPANTOTHENOYLCYSTEINE DECARBOXYLASE"/>
    <property type="match status" value="1"/>
</dbReference>
<dbReference type="Pfam" id="PF02441">
    <property type="entry name" value="Flavoprotein"/>
    <property type="match status" value="1"/>
</dbReference>
<dbReference type="SUPFAM" id="SSF52507">
    <property type="entry name" value="Homo-oligomeric flavin-containing Cys decarboxylases, HFCD"/>
    <property type="match status" value="1"/>
</dbReference>
<gene>
    <name type="primary">PPCDC</name>
    <name type="synonym">COAC</name>
    <name type="ORF">MDS018</name>
    <name type="ORF">UNQ9365/PRO34154</name>
</gene>
<keyword id="KW-0002">3D-structure</keyword>
<keyword id="KW-0025">Alternative splicing</keyword>
<keyword id="KW-0173">Coenzyme A biosynthesis</keyword>
<keyword id="KW-0210">Decarboxylase</keyword>
<keyword id="KW-0285">Flavoprotein</keyword>
<keyword id="KW-0288">FMN</keyword>
<keyword id="KW-0456">Lyase</keyword>
<keyword id="KW-1267">Proteomics identification</keyword>
<keyword id="KW-1185">Reference proteome</keyword>
<reference key="1">
    <citation type="submission" date="1999-09" db="EMBL/GenBank/DDBJ databases">
        <title>Novel genes expressed in hematopoietic stem/progenitor cells from myelodysplastic syndrome patients.</title>
        <authorList>
            <person name="Huang C."/>
            <person name="Qian B."/>
            <person name="Tu Y."/>
            <person name="Gu W."/>
            <person name="Wang Y."/>
            <person name="Han Z."/>
            <person name="Chen Z."/>
        </authorList>
    </citation>
    <scope>NUCLEOTIDE SEQUENCE [LARGE SCALE MRNA] (ISOFORM 2)</scope>
    <source>
        <tissue>Hematopoietic stem cell</tissue>
    </source>
</reference>
<reference key="2">
    <citation type="journal article" date="2003" name="Genome Res.">
        <title>The secreted protein discovery initiative (SPDI), a large-scale effort to identify novel human secreted and transmembrane proteins: a bioinformatics assessment.</title>
        <authorList>
            <person name="Clark H.F."/>
            <person name="Gurney A.L."/>
            <person name="Abaya E."/>
            <person name="Baker K."/>
            <person name="Baldwin D.T."/>
            <person name="Brush J."/>
            <person name="Chen J."/>
            <person name="Chow B."/>
            <person name="Chui C."/>
            <person name="Crowley C."/>
            <person name="Currell B."/>
            <person name="Deuel B."/>
            <person name="Dowd P."/>
            <person name="Eaton D."/>
            <person name="Foster J.S."/>
            <person name="Grimaldi C."/>
            <person name="Gu Q."/>
            <person name="Hass P.E."/>
            <person name="Heldens S."/>
            <person name="Huang A."/>
            <person name="Kim H.S."/>
            <person name="Klimowski L."/>
            <person name="Jin Y."/>
            <person name="Johnson S."/>
            <person name="Lee J."/>
            <person name="Lewis L."/>
            <person name="Liao D."/>
            <person name="Mark M.R."/>
            <person name="Robbie E."/>
            <person name="Sanchez C."/>
            <person name="Schoenfeld J."/>
            <person name="Seshagiri S."/>
            <person name="Simmons L."/>
            <person name="Singh J."/>
            <person name="Smith V."/>
            <person name="Stinson J."/>
            <person name="Vagts A."/>
            <person name="Vandlen R.L."/>
            <person name="Watanabe C."/>
            <person name="Wieand D."/>
            <person name="Woods K."/>
            <person name="Xie M.-H."/>
            <person name="Yansura D.G."/>
            <person name="Yi S."/>
            <person name="Yu G."/>
            <person name="Yuan J."/>
            <person name="Zhang M."/>
            <person name="Zhang Z."/>
            <person name="Goddard A.D."/>
            <person name="Wood W.I."/>
            <person name="Godowski P.J."/>
            <person name="Gray A.M."/>
        </authorList>
    </citation>
    <scope>NUCLEOTIDE SEQUENCE [LARGE SCALE MRNA] (ISOFORM 1)</scope>
</reference>
<reference key="3">
    <citation type="journal article" date="2004" name="Nat. Genet.">
        <title>Complete sequencing and characterization of 21,243 full-length human cDNAs.</title>
        <authorList>
            <person name="Ota T."/>
            <person name="Suzuki Y."/>
            <person name="Nishikawa T."/>
            <person name="Otsuki T."/>
            <person name="Sugiyama T."/>
            <person name="Irie R."/>
            <person name="Wakamatsu A."/>
            <person name="Hayashi K."/>
            <person name="Sato H."/>
            <person name="Nagai K."/>
            <person name="Kimura K."/>
            <person name="Makita H."/>
            <person name="Sekine M."/>
            <person name="Obayashi M."/>
            <person name="Nishi T."/>
            <person name="Shibahara T."/>
            <person name="Tanaka T."/>
            <person name="Ishii S."/>
            <person name="Yamamoto J."/>
            <person name="Saito K."/>
            <person name="Kawai Y."/>
            <person name="Isono Y."/>
            <person name="Nakamura Y."/>
            <person name="Nagahari K."/>
            <person name="Murakami K."/>
            <person name="Yasuda T."/>
            <person name="Iwayanagi T."/>
            <person name="Wagatsuma M."/>
            <person name="Shiratori A."/>
            <person name="Sudo H."/>
            <person name="Hosoiri T."/>
            <person name="Kaku Y."/>
            <person name="Kodaira H."/>
            <person name="Kondo H."/>
            <person name="Sugawara M."/>
            <person name="Takahashi M."/>
            <person name="Kanda K."/>
            <person name="Yokoi T."/>
            <person name="Furuya T."/>
            <person name="Kikkawa E."/>
            <person name="Omura Y."/>
            <person name="Abe K."/>
            <person name="Kamihara K."/>
            <person name="Katsuta N."/>
            <person name="Sato K."/>
            <person name="Tanikawa M."/>
            <person name="Yamazaki M."/>
            <person name="Ninomiya K."/>
            <person name="Ishibashi T."/>
            <person name="Yamashita H."/>
            <person name="Murakawa K."/>
            <person name="Fujimori K."/>
            <person name="Tanai H."/>
            <person name="Kimata M."/>
            <person name="Watanabe M."/>
            <person name="Hiraoka S."/>
            <person name="Chiba Y."/>
            <person name="Ishida S."/>
            <person name="Ono Y."/>
            <person name="Takiguchi S."/>
            <person name="Watanabe S."/>
            <person name="Yosida M."/>
            <person name="Hotuta T."/>
            <person name="Kusano J."/>
            <person name="Kanehori K."/>
            <person name="Takahashi-Fujii A."/>
            <person name="Hara H."/>
            <person name="Tanase T.-O."/>
            <person name="Nomura Y."/>
            <person name="Togiya S."/>
            <person name="Komai F."/>
            <person name="Hara R."/>
            <person name="Takeuchi K."/>
            <person name="Arita M."/>
            <person name="Imose N."/>
            <person name="Musashino K."/>
            <person name="Yuuki H."/>
            <person name="Oshima A."/>
            <person name="Sasaki N."/>
            <person name="Aotsuka S."/>
            <person name="Yoshikawa Y."/>
            <person name="Matsunawa H."/>
            <person name="Ichihara T."/>
            <person name="Shiohata N."/>
            <person name="Sano S."/>
            <person name="Moriya S."/>
            <person name="Momiyama H."/>
            <person name="Satoh N."/>
            <person name="Takami S."/>
            <person name="Terashima Y."/>
            <person name="Suzuki O."/>
            <person name="Nakagawa S."/>
            <person name="Senoh A."/>
            <person name="Mizoguchi H."/>
            <person name="Goto Y."/>
            <person name="Shimizu F."/>
            <person name="Wakebe H."/>
            <person name="Hishigaki H."/>
            <person name="Watanabe T."/>
            <person name="Sugiyama A."/>
            <person name="Takemoto M."/>
            <person name="Kawakami B."/>
            <person name="Yamazaki M."/>
            <person name="Watanabe K."/>
            <person name="Kumagai A."/>
            <person name="Itakura S."/>
            <person name="Fukuzumi Y."/>
            <person name="Fujimori Y."/>
            <person name="Komiyama M."/>
            <person name="Tashiro H."/>
            <person name="Tanigami A."/>
            <person name="Fujiwara T."/>
            <person name="Ono T."/>
            <person name="Yamada K."/>
            <person name="Fujii Y."/>
            <person name="Ozaki K."/>
            <person name="Hirao M."/>
            <person name="Ohmori Y."/>
            <person name="Kawabata A."/>
            <person name="Hikiji T."/>
            <person name="Kobatake N."/>
            <person name="Inagaki H."/>
            <person name="Ikema Y."/>
            <person name="Okamoto S."/>
            <person name="Okitani R."/>
            <person name="Kawakami T."/>
            <person name="Noguchi S."/>
            <person name="Itoh T."/>
            <person name="Shigeta K."/>
            <person name="Senba T."/>
            <person name="Matsumura K."/>
            <person name="Nakajima Y."/>
            <person name="Mizuno T."/>
            <person name="Morinaga M."/>
            <person name="Sasaki M."/>
            <person name="Togashi T."/>
            <person name="Oyama M."/>
            <person name="Hata H."/>
            <person name="Watanabe M."/>
            <person name="Komatsu T."/>
            <person name="Mizushima-Sugano J."/>
            <person name="Satoh T."/>
            <person name="Shirai Y."/>
            <person name="Takahashi Y."/>
            <person name="Nakagawa K."/>
            <person name="Okumura K."/>
            <person name="Nagase T."/>
            <person name="Nomura N."/>
            <person name="Kikuchi H."/>
            <person name="Masuho Y."/>
            <person name="Yamashita R."/>
            <person name="Nakai K."/>
            <person name="Yada T."/>
            <person name="Nakamura Y."/>
            <person name="Ohara O."/>
            <person name="Isogai T."/>
            <person name="Sugano S."/>
        </authorList>
    </citation>
    <scope>NUCLEOTIDE SEQUENCE [LARGE SCALE MRNA] (ISOFORM 1)</scope>
</reference>
<reference key="4">
    <citation type="journal article" date="2006" name="Nature">
        <title>Analysis of the DNA sequence and duplication history of human chromosome 15.</title>
        <authorList>
            <person name="Zody M.C."/>
            <person name="Garber M."/>
            <person name="Sharpe T."/>
            <person name="Young S.K."/>
            <person name="Rowen L."/>
            <person name="O'Neill K."/>
            <person name="Whittaker C.A."/>
            <person name="Kamal M."/>
            <person name="Chang J.L."/>
            <person name="Cuomo C.A."/>
            <person name="Dewar K."/>
            <person name="FitzGerald M.G."/>
            <person name="Kodira C.D."/>
            <person name="Madan A."/>
            <person name="Qin S."/>
            <person name="Yang X."/>
            <person name="Abbasi N."/>
            <person name="Abouelleil A."/>
            <person name="Arachchi H.M."/>
            <person name="Baradarani L."/>
            <person name="Birditt B."/>
            <person name="Bloom S."/>
            <person name="Bloom T."/>
            <person name="Borowsky M.L."/>
            <person name="Burke J."/>
            <person name="Butler J."/>
            <person name="Cook A."/>
            <person name="DeArellano K."/>
            <person name="DeCaprio D."/>
            <person name="Dorris L. III"/>
            <person name="Dors M."/>
            <person name="Eichler E.E."/>
            <person name="Engels R."/>
            <person name="Fahey J."/>
            <person name="Fleetwood P."/>
            <person name="Friedman C."/>
            <person name="Gearin G."/>
            <person name="Hall J.L."/>
            <person name="Hensley G."/>
            <person name="Johnson E."/>
            <person name="Jones C."/>
            <person name="Kamat A."/>
            <person name="Kaur A."/>
            <person name="Locke D.P."/>
            <person name="Madan A."/>
            <person name="Munson G."/>
            <person name="Jaffe D.B."/>
            <person name="Lui A."/>
            <person name="Macdonald P."/>
            <person name="Mauceli E."/>
            <person name="Naylor J.W."/>
            <person name="Nesbitt R."/>
            <person name="Nicol R."/>
            <person name="O'Leary S.B."/>
            <person name="Ratcliffe A."/>
            <person name="Rounsley S."/>
            <person name="She X."/>
            <person name="Sneddon K.M.B."/>
            <person name="Stewart S."/>
            <person name="Sougnez C."/>
            <person name="Stone S.M."/>
            <person name="Topham K."/>
            <person name="Vincent D."/>
            <person name="Wang S."/>
            <person name="Zimmer A.R."/>
            <person name="Birren B.W."/>
            <person name="Hood L."/>
            <person name="Lander E.S."/>
            <person name="Nusbaum C."/>
        </authorList>
    </citation>
    <scope>NUCLEOTIDE SEQUENCE [LARGE SCALE GENOMIC DNA]</scope>
</reference>
<reference key="5">
    <citation type="journal article" date="2004" name="Genome Res.">
        <title>The status, quality, and expansion of the NIH full-length cDNA project: the Mammalian Gene Collection (MGC).</title>
        <authorList>
            <consortium name="The MGC Project Team"/>
        </authorList>
    </citation>
    <scope>NUCLEOTIDE SEQUENCE [LARGE SCALE MRNA] (ISOFORM 1)</scope>
    <source>
        <tissue>Eye</tissue>
    </source>
</reference>
<reference key="6">
    <citation type="journal article" date="2002" name="J. Biol. Chem.">
        <title>Complete reconstitution of the human coenzyme A biosynthetic pathway via comparative genomics.</title>
        <authorList>
            <person name="Daugherty M."/>
            <person name="Polanuyer B."/>
            <person name="Farrell M."/>
            <person name="Scholle M."/>
            <person name="Lykidis A."/>
            <person name="de Crecy-Lagard V."/>
            <person name="Osterman A."/>
        </authorList>
    </citation>
    <scope>IDENTIFICATION</scope>
    <scope>FUNCTION</scope>
    <scope>CATALYTIC ACTIVITY</scope>
    <scope>PATHWAY</scope>
</reference>
<reference key="7">
    <citation type="journal article" date="2004" name="Biochemistry">
        <title>Mechanistic studies on phosphopantothenoylcysteine decarboxylase: trapping of an enethiolate intermediate with a mechanism-based inactivating agent.</title>
        <authorList>
            <person name="Strauss E."/>
            <person name="Zhai H."/>
            <person name="Brand L.A."/>
            <person name="McLafferty F.W."/>
            <person name="Begley T.P."/>
        </authorList>
    </citation>
    <scope>FUNCTION</scope>
    <scope>IDENTIFICATION BY MASS SPECTROMETRY</scope>
    <scope>CATALYTIC ACTIVITY</scope>
    <scope>MUTAGENESIS OF CYS-173</scope>
</reference>
<reference key="8">
    <citation type="journal article" date="2003" name="Acta Crystallogr. D">
        <title>Unusual space-group pseudosymmetry in crystals of human phosphopantothenoylcysteine decarboxylase.</title>
        <authorList>
            <person name="Manoj N."/>
            <person name="Ealick S.E."/>
        </authorList>
    </citation>
    <scope>X-RAY CRYSTALLOGRAPHY (2.91 ANGSTROMS) IN COMPLEX WITH FMN</scope>
    <scope>SUBUNIT</scope>
    <scope>COFACTOR</scope>
</reference>
<name>COAC_HUMAN</name>
<comment type="function">
    <text evidence="2 4">Catalyzes the decarboxylation of the cysteine moiety of 4-phosphopantothenoylcysteine to form 4'-phosphopantotheine and this reaction forms part of the biosynthesis of coenzyme A.</text>
</comment>
<comment type="catalytic activity">
    <reaction evidence="2 4">
        <text>N-[(R)-4-phosphopantothenoyl]-L-cysteine + H(+) = (R)-4'-phosphopantetheine + CO2</text>
        <dbReference type="Rhea" id="RHEA:16793"/>
        <dbReference type="ChEBI" id="CHEBI:15378"/>
        <dbReference type="ChEBI" id="CHEBI:16526"/>
        <dbReference type="ChEBI" id="CHEBI:59458"/>
        <dbReference type="ChEBI" id="CHEBI:61723"/>
        <dbReference type="EC" id="4.1.1.36"/>
    </reaction>
    <physiologicalReaction direction="left-to-right" evidence="7">
        <dbReference type="Rhea" id="RHEA:16794"/>
    </physiologicalReaction>
</comment>
<comment type="cofactor">
    <cofactor evidence="3">
        <name>FMN</name>
        <dbReference type="ChEBI" id="CHEBI:58210"/>
    </cofactor>
    <text evidence="3">Binds 1 FMN per subunit.</text>
</comment>
<comment type="pathway">
    <text evidence="2">Cofactor biosynthesis; coenzyme A biosynthesis; CoA from (R)-pantothenate: step 3/5.</text>
</comment>
<comment type="subunit">
    <text evidence="3">Homotrimer.</text>
</comment>
<comment type="interaction">
    <interactant intactId="EBI-724333">
        <id>Q96CD2</id>
    </interactant>
    <interactant intactId="EBI-742054">
        <id>Q96D03</id>
        <label>DDIT4L</label>
    </interactant>
    <organismsDiffer>false</organismsDiffer>
    <experiments>3</experiments>
</comment>
<comment type="interaction">
    <interactant intactId="EBI-724333">
        <id>Q96CD2</id>
    </interactant>
    <interactant intactId="EBI-10253815">
        <id>Q6PIV2</id>
        <label>FOXR1</label>
    </interactant>
    <organismsDiffer>false</organismsDiffer>
    <experiments>10</experiments>
</comment>
<comment type="interaction">
    <interactant intactId="EBI-724333">
        <id>Q96CD2</id>
    </interactant>
    <interactant intactId="EBI-12126220">
        <id>Q93015-2</id>
        <label>NAA80</label>
    </interactant>
    <organismsDiffer>false</organismsDiffer>
    <experiments>3</experiments>
</comment>
<comment type="interaction">
    <interactant intactId="EBI-724333">
        <id>Q96CD2</id>
    </interactant>
    <interactant intactId="EBI-741158">
        <id>Q96HA8</id>
        <label>NTAQ1</label>
    </interactant>
    <organismsDiffer>false</organismsDiffer>
    <experiments>6</experiments>
</comment>
<comment type="interaction">
    <interactant intactId="EBI-724333">
        <id>Q96CD2</id>
    </interactant>
    <interactant intactId="EBI-742388">
        <id>Q9H8W4</id>
        <label>PLEKHF2</label>
    </interactant>
    <organismsDiffer>false</organismsDiffer>
    <experiments>3</experiments>
</comment>
<comment type="interaction">
    <interactant intactId="EBI-724333">
        <id>Q96CD2</id>
    </interactant>
    <interactant intactId="EBI-724333">
        <id>Q96CD2</id>
        <label>PPCDC</label>
    </interactant>
    <organismsDiffer>false</organismsDiffer>
    <experiments>5</experiments>
</comment>
<comment type="interaction">
    <interactant intactId="EBI-724333">
        <id>Q96CD2</id>
    </interactant>
    <interactant intactId="EBI-396072">
        <id>Q13427</id>
        <label>PPIG</label>
    </interactant>
    <organismsDiffer>false</organismsDiffer>
    <experiments>3</experiments>
</comment>
<comment type="interaction">
    <interactant intactId="EBI-724333">
        <id>Q96CD2</id>
    </interactant>
    <interactant intactId="EBI-373337">
        <id>O76064</id>
        <label>RNF8</label>
    </interactant>
    <organismsDiffer>false</organismsDiffer>
    <experiments>3</experiments>
</comment>
<comment type="interaction">
    <interactant intactId="EBI-724333">
        <id>Q96CD2</id>
    </interactant>
    <interactant intactId="EBI-10268630">
        <id>Q8N9Q2</id>
        <label>SREK1IP1</label>
    </interactant>
    <organismsDiffer>false</organismsDiffer>
    <experiments>3</experiments>
</comment>
<comment type="interaction">
    <interactant intactId="EBI-724333">
        <id>Q96CD2</id>
    </interactant>
    <interactant intactId="EBI-12029034">
        <id>Q96PF1</id>
        <label>TGM7</label>
    </interactant>
    <organismsDiffer>false</organismsDiffer>
    <experiments>3</experiments>
</comment>
<comment type="interaction">
    <interactant intactId="EBI-724333">
        <id>Q96CD2</id>
    </interactant>
    <interactant intactId="EBI-2932492">
        <id>Q99757</id>
        <label>TXN2</label>
    </interactant>
    <organismsDiffer>false</organismsDiffer>
    <experiments>6</experiments>
</comment>
<comment type="interaction">
    <interactant intactId="EBI-724333">
        <id>Q96CD2</id>
    </interactant>
    <interactant intactId="EBI-10180829">
        <id>Q7KZS0</id>
        <label>UBE2I</label>
    </interactant>
    <organismsDiffer>false</organismsDiffer>
    <experiments>3</experiments>
</comment>
<comment type="interaction">
    <interactant intactId="EBI-724333">
        <id>Q96CD2</id>
    </interactant>
    <interactant intactId="EBI-749023">
        <id>Q9UNY5</id>
        <label>ZNF232</label>
    </interactant>
    <organismsDiffer>false</organismsDiffer>
    <experiments>6</experiments>
</comment>
<comment type="alternative products">
    <event type="alternative splicing"/>
    <isoform>
        <id>Q96CD2-1</id>
        <name>1</name>
        <sequence type="displayed"/>
    </isoform>
    <isoform>
        <id>Q96CD2-2</id>
        <name>2</name>
        <sequence type="described" ref="VSP_044802"/>
    </isoform>
</comment>
<comment type="miscellaneous">
    <molecule>Isoform 2</molecule>
    <text evidence="6">The Met-1 codon is associated with a polymorphism (dbSNP:rs2304899) that replaces the initiation ATG codon by an ATA codon.</text>
</comment>
<comment type="similarity">
    <text evidence="6">Belongs to the HFCD (homooligomeric flavin containing Cys decarboxylase) superfamily.</text>
</comment>
<accession>Q96CD2</accession>
<accession>Q96SX0</accession>
<accession>Q9HC17</accession>
<sequence length="204" mass="22395">MEPKASCPAAAPLMERKFHVLVGVTGSVAALKLPLLVSKLLDIPGLEVAVVTTERAKHFYSPQDIPVTLYSDADEWEIWKSRSDPVLHIDLRRWADLLLVAPLDANTLGKVASGICDNLLTCVMRAWDRSKPLLFCPAMNTAMWEHPITAQQVDQLKAFGYVEIPCVAKKLVCGDEGLGAMAEVGTIVDKVKEVLFQHSGFQQS</sequence>
<proteinExistence type="evidence at protein level"/>
<feature type="chain" id="PRO_0000182030" description="Phosphopantothenoylcysteine decarboxylase">
    <location>
        <begin position="1"/>
        <end position="204"/>
    </location>
</feature>
<feature type="active site" description="Proton donor" evidence="8">
    <location>
        <position position="173"/>
    </location>
</feature>
<feature type="binding site" evidence="3">
    <location>
        <position position="59"/>
    </location>
    <ligand>
        <name>FMN</name>
        <dbReference type="ChEBI" id="CHEBI:58210"/>
    </ligand>
</feature>
<feature type="binding site" evidence="3">
    <location>
        <begin position="104"/>
        <end position="107"/>
    </location>
    <ligand>
        <name>FMN</name>
        <dbReference type="ChEBI" id="CHEBI:58210"/>
    </ligand>
</feature>
<feature type="binding site" evidence="1">
    <location>
        <position position="140"/>
    </location>
    <ligand>
        <name>substrate</name>
    </ligand>
</feature>
<feature type="splice variant" id="VSP_044802" description="In isoform 2." evidence="5">
    <original>MEPKASCPAAAPLMERKFHVLVGVTGSVAALKLPLLVSKLLDIPGLEVAVVTTERAKHFYSPQDIPVTLYSDADEWEI</original>
    <variation>M</variation>
    <location>
        <begin position="1"/>
        <end position="78"/>
    </location>
</feature>
<feature type="sequence variant" id="VAR_068974" description="In dbSNP:rs2304899.">
    <original>I</original>
    <variation>M</variation>
    <location>
        <position position="78"/>
    </location>
</feature>
<feature type="mutagenesis site" description="Loss of activity." evidence="4">
    <original>C</original>
    <variation>S</variation>
    <location>
        <position position="173"/>
    </location>
</feature>
<feature type="sequence conflict" description="In Ref. 3; BAB55151." evidence="6" ref="3">
    <original>A</original>
    <variation>S</variation>
    <location>
        <position position="49"/>
    </location>
</feature>
<feature type="strand" evidence="9">
    <location>
        <begin position="16"/>
        <end position="24"/>
    </location>
</feature>
<feature type="helix" evidence="9">
    <location>
        <begin position="28"/>
        <end position="31"/>
    </location>
</feature>
<feature type="helix" evidence="9">
    <location>
        <begin position="33"/>
        <end position="40"/>
    </location>
</feature>
<feature type="strand" evidence="9">
    <location>
        <begin position="46"/>
        <end position="52"/>
    </location>
</feature>
<feature type="helix" evidence="9">
    <location>
        <begin position="55"/>
        <end position="58"/>
    </location>
</feature>
<feature type="helix" evidence="9">
    <location>
        <begin position="62"/>
        <end position="64"/>
    </location>
</feature>
<feature type="helix" evidence="9">
    <location>
        <begin position="72"/>
        <end position="77"/>
    </location>
</feature>
<feature type="helix" evidence="9">
    <location>
        <begin position="87"/>
        <end position="92"/>
    </location>
</feature>
<feature type="strand" evidence="9">
    <location>
        <begin position="96"/>
        <end position="103"/>
    </location>
</feature>
<feature type="helix" evidence="9">
    <location>
        <begin position="105"/>
        <end position="112"/>
    </location>
</feature>
<feature type="helix" evidence="9">
    <location>
        <begin position="119"/>
        <end position="125"/>
    </location>
</feature>
<feature type="strand" evidence="9">
    <location>
        <begin position="135"/>
        <end position="137"/>
    </location>
</feature>
<feature type="helix" evidence="9">
    <location>
        <begin position="141"/>
        <end position="144"/>
    </location>
</feature>
<feature type="helix" evidence="9">
    <location>
        <begin position="149"/>
        <end position="157"/>
    </location>
</feature>
<feature type="helix" evidence="9">
    <location>
        <begin position="186"/>
        <end position="191"/>
    </location>
</feature>
<evidence type="ECO:0000250" key="1"/>
<evidence type="ECO:0000269" key="2">
    <source>
    </source>
</evidence>
<evidence type="ECO:0000269" key="3">
    <source>
    </source>
</evidence>
<evidence type="ECO:0000269" key="4">
    <source>
    </source>
</evidence>
<evidence type="ECO:0000303" key="5">
    <source ref="1"/>
</evidence>
<evidence type="ECO:0000305" key="6"/>
<evidence type="ECO:0000305" key="7">
    <source>
    </source>
</evidence>
<evidence type="ECO:0000305" key="8">
    <source>
    </source>
</evidence>
<evidence type="ECO:0007829" key="9">
    <source>
        <dbReference type="PDB" id="1QZU"/>
    </source>
</evidence>